<reference key="1">
    <citation type="journal article" date="1993" name="J. Biol. Chem.">
        <title>A novel binding protein of the origin of the Escherichia coli chromosome.</title>
        <authorList>
            <person name="Skarstad K."/>
            <person name="Thoeny B."/>
            <person name="Hwang D.S."/>
            <person name="Kornberg A."/>
        </authorList>
    </citation>
    <scope>NUCLEOTIDE SEQUENCE [GENOMIC DNA]</scope>
    <source>
        <strain>K12 / W3110 / ATCC 27325 / DSM 5911</strain>
    </source>
</reference>
<reference key="2">
    <citation type="journal article" date="1995" name="Nucleic Acids Res.">
        <title>Analysis of the Escherichia coli genome VI: DNA sequence of the region from 92.8 through 100 minutes.</title>
        <authorList>
            <person name="Burland V.D."/>
            <person name="Plunkett G. III"/>
            <person name="Sofia H.J."/>
            <person name="Daniels D.L."/>
            <person name="Blattner F.R."/>
        </authorList>
    </citation>
    <scope>NUCLEOTIDE SEQUENCE [LARGE SCALE GENOMIC DNA]</scope>
    <source>
        <strain>K12 / MG1655 / ATCC 47076</strain>
    </source>
</reference>
<reference key="3">
    <citation type="journal article" date="1997" name="Science">
        <title>The complete genome sequence of Escherichia coli K-12.</title>
        <authorList>
            <person name="Blattner F.R."/>
            <person name="Plunkett G. III"/>
            <person name="Bloch C.A."/>
            <person name="Perna N.T."/>
            <person name="Burland V."/>
            <person name="Riley M."/>
            <person name="Collado-Vides J."/>
            <person name="Glasner J.D."/>
            <person name="Rode C.K."/>
            <person name="Mayhew G.F."/>
            <person name="Gregor J."/>
            <person name="Davis N.W."/>
            <person name="Kirkpatrick H.A."/>
            <person name="Goeden M.A."/>
            <person name="Rose D.J."/>
            <person name="Mau B."/>
            <person name="Shao Y."/>
        </authorList>
    </citation>
    <scope>NUCLEOTIDE SEQUENCE [LARGE SCALE GENOMIC DNA]</scope>
    <source>
        <strain>K12 / MG1655 / ATCC 47076</strain>
    </source>
</reference>
<reference key="4">
    <citation type="journal article" date="2006" name="Mol. Syst. Biol.">
        <title>Highly accurate genome sequences of Escherichia coli K-12 strains MG1655 and W3110.</title>
        <authorList>
            <person name="Hayashi K."/>
            <person name="Morooka N."/>
            <person name="Yamamoto Y."/>
            <person name="Fujita K."/>
            <person name="Isono K."/>
            <person name="Choi S."/>
            <person name="Ohtsubo E."/>
            <person name="Baba T."/>
            <person name="Wanner B.L."/>
            <person name="Mori H."/>
            <person name="Horiuchi T."/>
        </authorList>
    </citation>
    <scope>NUCLEOTIDE SEQUENCE [LARGE SCALE GENOMIC DNA]</scope>
    <source>
        <strain>K12 / W3110 / ATCC 27325 / DSM 5911</strain>
    </source>
</reference>
<gene>
    <name evidence="3" type="primary">gpmB</name>
    <name type="synonym">ytjC</name>
    <name type="ordered locus">b4395</name>
    <name type="ordered locus">JW4358</name>
</gene>
<accession>P0A7A2</accession>
<accession>P36942</accession>
<accession>Q2M5S2</accession>
<feature type="chain" id="PRO_0000179946" description="Probable phosphoglycerate mutase GpmB">
    <location>
        <begin position="1"/>
        <end position="215"/>
    </location>
</feature>
<feature type="active site" description="Tele-phosphohistidine intermediate" evidence="1 3">
    <location>
        <position position="9"/>
    </location>
</feature>
<feature type="active site" description="Proton donor/acceptor" evidence="1 3">
    <location>
        <position position="82"/>
    </location>
</feature>
<feature type="binding site" evidence="1 3">
    <location>
        <begin position="8"/>
        <end position="15"/>
    </location>
    <ligand>
        <name>substrate</name>
    </ligand>
</feature>
<feature type="binding site" evidence="1 3">
    <location>
        <begin position="21"/>
        <end position="22"/>
    </location>
    <ligand>
        <name>substrate</name>
    </ligand>
</feature>
<feature type="binding site" evidence="2 3">
    <location>
        <position position="58"/>
    </location>
    <ligand>
        <name>substrate</name>
    </ligand>
</feature>
<feature type="binding site" evidence="2 3">
    <location>
        <position position="60"/>
    </location>
    <ligand>
        <name>substrate</name>
    </ligand>
</feature>
<feature type="binding site" evidence="1 3">
    <location>
        <begin position="82"/>
        <end position="85"/>
    </location>
    <ligand>
        <name>substrate</name>
    </ligand>
</feature>
<feature type="binding site" evidence="1 3">
    <location>
        <begin position="104"/>
        <end position="105"/>
    </location>
    <ligand>
        <name>substrate</name>
    </ligand>
</feature>
<feature type="binding site" evidence="1 3">
    <location>
        <begin position="151"/>
        <end position="152"/>
    </location>
    <ligand>
        <name>substrate</name>
    </ligand>
</feature>
<feature type="site" description="Transition state stabilizer" evidence="1 3">
    <location>
        <position position="150"/>
    </location>
</feature>
<feature type="sequence conflict" description="In Ref. 1." evidence="4" ref="1">
    <original>V</original>
    <variation>L</variation>
    <location>
        <position position="148"/>
    </location>
</feature>
<comment type="catalytic activity">
    <reaction evidence="3">
        <text>(2R)-2-phosphoglycerate = (2R)-3-phosphoglycerate</text>
        <dbReference type="Rhea" id="RHEA:15901"/>
        <dbReference type="ChEBI" id="CHEBI:58272"/>
        <dbReference type="ChEBI" id="CHEBI:58289"/>
    </reaction>
</comment>
<comment type="pathway">
    <text evidence="3">Carbohydrate degradation; glycolysis; pyruvate from D-glyceraldehyde 3-phosphate: step 3/5.</text>
</comment>
<comment type="similarity">
    <text evidence="3">Belongs to the phosphoglycerate mutase family. GpmB subfamily.</text>
</comment>
<protein>
    <recommendedName>
        <fullName evidence="3">Probable phosphoglycerate mutase GpmB</fullName>
        <ecNumber evidence="3">5.4.2.-</ecNumber>
    </recommendedName>
    <alternativeName>
        <fullName evidence="3">PGAM</fullName>
    </alternativeName>
    <alternativeName>
        <fullName evidence="3">Phosphoglyceromutase</fullName>
    </alternativeName>
</protein>
<keyword id="KW-0324">Glycolysis</keyword>
<keyword id="KW-0413">Isomerase</keyword>
<keyword id="KW-1185">Reference proteome</keyword>
<organism>
    <name type="scientific">Escherichia coli (strain K12)</name>
    <dbReference type="NCBI Taxonomy" id="83333"/>
    <lineage>
        <taxon>Bacteria</taxon>
        <taxon>Pseudomonadati</taxon>
        <taxon>Pseudomonadota</taxon>
        <taxon>Gammaproteobacteria</taxon>
        <taxon>Enterobacterales</taxon>
        <taxon>Enterobacteriaceae</taxon>
        <taxon>Escherichia</taxon>
    </lineage>
</organism>
<sequence>MLQVYLVRHGETQWNAERRIQGQSDSPLTAKGEQQAMQVATRAKELGITHIISSDLGRTRRTAEIIAQACGCDIIFDSRLRELNMGVLEKRHIDSLTEEEENWRRQLVNGTVDGRIPEGESMQELSDRVNAALESCRDLPQGSRPLLVSHGIALGCLVSTILGLPAWAERRLRLRNCSISRVDYQESLWLASGWVVETAGDISHLDAPALDELQR</sequence>
<name>GPMB_ECOLI</name>
<evidence type="ECO:0000250" key="1">
    <source>
        <dbReference type="UniProtKB" id="P62707"/>
    </source>
</evidence>
<evidence type="ECO:0000250" key="2">
    <source>
        <dbReference type="UniProtKB" id="Q3JWH7"/>
    </source>
</evidence>
<evidence type="ECO:0000255" key="3">
    <source>
        <dbReference type="HAMAP-Rule" id="MF_01040"/>
    </source>
</evidence>
<evidence type="ECO:0000305" key="4"/>
<dbReference type="EC" id="5.4.2.-" evidence="3"/>
<dbReference type="EMBL" id="M97495">
    <property type="status" value="NOT_ANNOTATED_CDS"/>
    <property type="molecule type" value="Genomic_DNA"/>
</dbReference>
<dbReference type="EMBL" id="U14003">
    <property type="protein sequence ID" value="AAA97291.1"/>
    <property type="molecule type" value="Genomic_DNA"/>
</dbReference>
<dbReference type="EMBL" id="U00096">
    <property type="protein sequence ID" value="AAC77348.1"/>
    <property type="molecule type" value="Genomic_DNA"/>
</dbReference>
<dbReference type="EMBL" id="AP009048">
    <property type="protein sequence ID" value="BAE78384.1"/>
    <property type="molecule type" value="Genomic_DNA"/>
</dbReference>
<dbReference type="PIR" id="S56619">
    <property type="entry name" value="S56619"/>
</dbReference>
<dbReference type="RefSeq" id="NP_418812.1">
    <property type="nucleotide sequence ID" value="NC_000913.3"/>
</dbReference>
<dbReference type="RefSeq" id="WP_000942344.1">
    <property type="nucleotide sequence ID" value="NZ_STEB01000033.1"/>
</dbReference>
<dbReference type="SMR" id="P0A7A2"/>
<dbReference type="BioGRID" id="4261680">
    <property type="interactions" value="10"/>
</dbReference>
<dbReference type="DIP" id="DIP-9829N"/>
<dbReference type="FunCoup" id="P0A7A2">
    <property type="interactions" value="849"/>
</dbReference>
<dbReference type="IntAct" id="P0A7A2">
    <property type="interactions" value="5"/>
</dbReference>
<dbReference type="STRING" id="511145.b4395"/>
<dbReference type="jPOST" id="P0A7A2"/>
<dbReference type="PaxDb" id="511145-b4395"/>
<dbReference type="EnsemblBacteria" id="AAC77348">
    <property type="protein sequence ID" value="AAC77348"/>
    <property type="gene ID" value="b4395"/>
</dbReference>
<dbReference type="GeneID" id="93777450"/>
<dbReference type="GeneID" id="948918"/>
<dbReference type="KEGG" id="ecj:JW4358"/>
<dbReference type="KEGG" id="eco:b4395"/>
<dbReference type="KEGG" id="ecoc:C3026_23750"/>
<dbReference type="PATRIC" id="fig|1411691.4.peg.2289"/>
<dbReference type="EchoBASE" id="EB2083"/>
<dbReference type="eggNOG" id="COG0406">
    <property type="taxonomic scope" value="Bacteria"/>
</dbReference>
<dbReference type="HOGENOM" id="CLU_033323_9_5_6"/>
<dbReference type="InParanoid" id="P0A7A2"/>
<dbReference type="OMA" id="TEWNVAR"/>
<dbReference type="OrthoDB" id="9783269at2"/>
<dbReference type="PhylomeDB" id="P0A7A2"/>
<dbReference type="BioCyc" id="EcoCyc:PGAM2-MONOMER"/>
<dbReference type="UniPathway" id="UPA00109">
    <property type="reaction ID" value="UER00186"/>
</dbReference>
<dbReference type="PRO" id="PR:P0A7A2"/>
<dbReference type="Proteomes" id="UP000000625">
    <property type="component" value="Chromosome"/>
</dbReference>
<dbReference type="GO" id="GO:0005737">
    <property type="term" value="C:cytoplasm"/>
    <property type="evidence" value="ECO:0000318"/>
    <property type="project" value="GO_Central"/>
</dbReference>
<dbReference type="GO" id="GO:0016791">
    <property type="term" value="F:phosphatase activity"/>
    <property type="evidence" value="ECO:0000318"/>
    <property type="project" value="GO_Central"/>
</dbReference>
<dbReference type="GO" id="GO:0004619">
    <property type="term" value="F:phosphoglycerate mutase activity"/>
    <property type="evidence" value="ECO:0007669"/>
    <property type="project" value="UniProtKB-UniRule"/>
</dbReference>
<dbReference type="GO" id="GO:0006096">
    <property type="term" value="P:glycolytic process"/>
    <property type="evidence" value="ECO:0007669"/>
    <property type="project" value="UniProtKB-UniRule"/>
</dbReference>
<dbReference type="CDD" id="cd07067">
    <property type="entry name" value="HP_PGM_like"/>
    <property type="match status" value="1"/>
</dbReference>
<dbReference type="Gene3D" id="3.40.50.1240">
    <property type="entry name" value="Phosphoglycerate mutase-like"/>
    <property type="match status" value="1"/>
</dbReference>
<dbReference type="HAMAP" id="MF_01040">
    <property type="entry name" value="PGAM_GpmB"/>
    <property type="match status" value="1"/>
</dbReference>
<dbReference type="InterPro" id="IPR013078">
    <property type="entry name" value="His_Pase_superF_clade-1"/>
</dbReference>
<dbReference type="InterPro" id="IPR029033">
    <property type="entry name" value="His_PPase_superfam"/>
</dbReference>
<dbReference type="InterPro" id="IPR001345">
    <property type="entry name" value="PG/BPGM_mutase_AS"/>
</dbReference>
<dbReference type="InterPro" id="IPR050275">
    <property type="entry name" value="PGM_Phosphatase"/>
</dbReference>
<dbReference type="InterPro" id="IPR023086">
    <property type="entry name" value="Phosphoglycerate_mutase_GpmB"/>
</dbReference>
<dbReference type="NCBIfam" id="NF002901">
    <property type="entry name" value="PRK03482.1"/>
    <property type="match status" value="1"/>
</dbReference>
<dbReference type="PANTHER" id="PTHR48100">
    <property type="entry name" value="BROAD-SPECIFICITY PHOSPHATASE YOR283W-RELATED"/>
    <property type="match status" value="1"/>
</dbReference>
<dbReference type="PANTHER" id="PTHR48100:SF1">
    <property type="entry name" value="HISTIDINE PHOSPHATASE FAMILY PROTEIN-RELATED"/>
    <property type="match status" value="1"/>
</dbReference>
<dbReference type="Pfam" id="PF00300">
    <property type="entry name" value="His_Phos_1"/>
    <property type="match status" value="1"/>
</dbReference>
<dbReference type="SMART" id="SM00855">
    <property type="entry name" value="PGAM"/>
    <property type="match status" value="1"/>
</dbReference>
<dbReference type="SUPFAM" id="SSF53254">
    <property type="entry name" value="Phosphoglycerate mutase-like"/>
    <property type="match status" value="1"/>
</dbReference>
<dbReference type="PROSITE" id="PS00175">
    <property type="entry name" value="PG_MUTASE"/>
    <property type="match status" value="1"/>
</dbReference>
<proteinExistence type="inferred from homology"/>